<gene>
    <name evidence="1" type="primary">clpX</name>
</gene>
<feature type="chain" id="PRO_0000160304" description="ATP-dependent Clp protease ATP-binding subunit ClpX">
    <location>
        <begin position="1"/>
        <end position="440"/>
    </location>
</feature>
<feature type="domain" description="ClpX-type ZB" evidence="2">
    <location>
        <begin position="1"/>
        <end position="50"/>
    </location>
</feature>
<feature type="region of interest" description="Disordered" evidence="3">
    <location>
        <begin position="417"/>
        <end position="440"/>
    </location>
</feature>
<feature type="binding site" evidence="2">
    <location>
        <position position="9"/>
    </location>
    <ligand>
        <name>Zn(2+)</name>
        <dbReference type="ChEBI" id="CHEBI:29105"/>
    </ligand>
</feature>
<feature type="binding site" evidence="2">
    <location>
        <position position="12"/>
    </location>
    <ligand>
        <name>Zn(2+)</name>
        <dbReference type="ChEBI" id="CHEBI:29105"/>
    </ligand>
</feature>
<feature type="binding site" evidence="2">
    <location>
        <position position="31"/>
    </location>
    <ligand>
        <name>Zn(2+)</name>
        <dbReference type="ChEBI" id="CHEBI:29105"/>
    </ligand>
</feature>
<feature type="binding site" evidence="2">
    <location>
        <position position="34"/>
    </location>
    <ligand>
        <name>Zn(2+)</name>
        <dbReference type="ChEBI" id="CHEBI:29105"/>
    </ligand>
</feature>
<feature type="binding site" evidence="1">
    <location>
        <begin position="120"/>
        <end position="127"/>
    </location>
    <ligand>
        <name>ATP</name>
        <dbReference type="ChEBI" id="CHEBI:30616"/>
    </ligand>
</feature>
<sequence length="440" mass="47983">MDKTDKPCCSFCGAEKSPTVPLIAGNDGRICEACVKLAHQVVSSWGQRRKNQQLAPQLRTPVEYKKHLDESVIGQEAAKETLSVAVYNHYLRLLNCDREPVCQLGEQVELEKSNILMAGPSGTGKTLLVRTLARILGVPFAMADATTLTQAGYVGDDVDSIITRLLDAAGGDVQQAQWGIVYIDEVDKLAKRSGGGTAVRDISGEGVQQALLKMVEGTEVRISKSGRRNEHSEEQVVDTRNILFIAGGAFPGLEALVSSRIQPKNTGIGFHAQPRREAPSINELMASLLPDDLHEFGLIPEFIGRFPIITFLQELDHATLLRILTEPRNALVKQYKQLFAYQGVELVITDAALNYIADQALIRKTGARGLRAVLEAALQQTMFNMPSQPQLRGCTLDLVEHEDGGRSLEVLTRLAEDGSGRIQPDPSPVVEEKSALSADL</sequence>
<name>CLPX_AZOVI</name>
<protein>
    <recommendedName>
        <fullName evidence="1">ATP-dependent Clp protease ATP-binding subunit ClpX</fullName>
    </recommendedName>
</protein>
<organism>
    <name type="scientific">Azotobacter vinelandii</name>
    <dbReference type="NCBI Taxonomy" id="354"/>
    <lineage>
        <taxon>Bacteria</taxon>
        <taxon>Pseudomonadati</taxon>
        <taxon>Pseudomonadota</taxon>
        <taxon>Gammaproteobacteria</taxon>
        <taxon>Pseudomonadales</taxon>
        <taxon>Pseudomonadaceae</taxon>
        <taxon>Azotobacter</taxon>
    </lineage>
</organism>
<keyword id="KW-0067">ATP-binding</keyword>
<keyword id="KW-0143">Chaperone</keyword>
<keyword id="KW-0479">Metal-binding</keyword>
<keyword id="KW-0547">Nucleotide-binding</keyword>
<keyword id="KW-0862">Zinc</keyword>
<proteinExistence type="inferred from homology"/>
<evidence type="ECO:0000255" key="1">
    <source>
        <dbReference type="HAMAP-Rule" id="MF_00175"/>
    </source>
</evidence>
<evidence type="ECO:0000255" key="2">
    <source>
        <dbReference type="PROSITE-ProRule" id="PRU01250"/>
    </source>
</evidence>
<evidence type="ECO:0000256" key="3">
    <source>
        <dbReference type="SAM" id="MobiDB-lite"/>
    </source>
</evidence>
<evidence type="ECO:0000305" key="4"/>
<dbReference type="EMBL" id="M20568">
    <property type="protein sequence ID" value="AAA64733.1"/>
    <property type="molecule type" value="Genomic_DNA"/>
</dbReference>
<dbReference type="EMBL" id="M20568">
    <property type="protein sequence ID" value="AAA64734.1"/>
    <property type="status" value="ALT_INIT"/>
    <property type="molecule type" value="Genomic_DNA"/>
</dbReference>
<dbReference type="RefSeq" id="WP_012698861.1">
    <property type="nucleotide sequence ID" value="NZ_FPKM01000020.1"/>
</dbReference>
<dbReference type="SMR" id="P33683"/>
<dbReference type="GeneID" id="88183634"/>
<dbReference type="OMA" id="CVKLAHQ"/>
<dbReference type="GO" id="GO:0005524">
    <property type="term" value="F:ATP binding"/>
    <property type="evidence" value="ECO:0007669"/>
    <property type="project" value="UniProtKB-UniRule"/>
</dbReference>
<dbReference type="GO" id="GO:0016887">
    <property type="term" value="F:ATP hydrolysis activity"/>
    <property type="evidence" value="ECO:0007669"/>
    <property type="project" value="InterPro"/>
</dbReference>
<dbReference type="GO" id="GO:0140662">
    <property type="term" value="F:ATP-dependent protein folding chaperone"/>
    <property type="evidence" value="ECO:0007669"/>
    <property type="project" value="InterPro"/>
</dbReference>
<dbReference type="GO" id="GO:0046983">
    <property type="term" value="F:protein dimerization activity"/>
    <property type="evidence" value="ECO:0007669"/>
    <property type="project" value="InterPro"/>
</dbReference>
<dbReference type="GO" id="GO:0051082">
    <property type="term" value="F:unfolded protein binding"/>
    <property type="evidence" value="ECO:0007669"/>
    <property type="project" value="UniProtKB-UniRule"/>
</dbReference>
<dbReference type="GO" id="GO:0008270">
    <property type="term" value="F:zinc ion binding"/>
    <property type="evidence" value="ECO:0007669"/>
    <property type="project" value="InterPro"/>
</dbReference>
<dbReference type="GO" id="GO:0051603">
    <property type="term" value="P:proteolysis involved in protein catabolic process"/>
    <property type="evidence" value="ECO:0007669"/>
    <property type="project" value="TreeGrafter"/>
</dbReference>
<dbReference type="FunFam" id="1.10.8.60:FF:000002">
    <property type="entry name" value="ATP-dependent Clp protease ATP-binding subunit ClpX"/>
    <property type="match status" value="1"/>
</dbReference>
<dbReference type="Gene3D" id="1.10.8.60">
    <property type="match status" value="1"/>
</dbReference>
<dbReference type="Gene3D" id="6.20.220.10">
    <property type="entry name" value="ClpX chaperone, C4-type zinc finger domain"/>
    <property type="match status" value="1"/>
</dbReference>
<dbReference type="Gene3D" id="3.40.50.300">
    <property type="entry name" value="P-loop containing nucleotide triphosphate hydrolases"/>
    <property type="match status" value="1"/>
</dbReference>
<dbReference type="HAMAP" id="MF_00175">
    <property type="entry name" value="ClpX"/>
    <property type="match status" value="1"/>
</dbReference>
<dbReference type="InterPro" id="IPR003593">
    <property type="entry name" value="AAA+_ATPase"/>
</dbReference>
<dbReference type="InterPro" id="IPR050052">
    <property type="entry name" value="ATP-dep_Clp_protease_ClpX"/>
</dbReference>
<dbReference type="InterPro" id="IPR003959">
    <property type="entry name" value="ATPase_AAA_core"/>
</dbReference>
<dbReference type="InterPro" id="IPR019489">
    <property type="entry name" value="Clp_ATPase_C"/>
</dbReference>
<dbReference type="InterPro" id="IPR004487">
    <property type="entry name" value="Clp_protease_ATP-bd_su_ClpX"/>
</dbReference>
<dbReference type="InterPro" id="IPR046425">
    <property type="entry name" value="ClpX_bact"/>
</dbReference>
<dbReference type="InterPro" id="IPR027417">
    <property type="entry name" value="P-loop_NTPase"/>
</dbReference>
<dbReference type="InterPro" id="IPR010603">
    <property type="entry name" value="Znf_CppX_C4"/>
</dbReference>
<dbReference type="InterPro" id="IPR038366">
    <property type="entry name" value="Znf_CppX_C4_sf"/>
</dbReference>
<dbReference type="NCBIfam" id="TIGR00382">
    <property type="entry name" value="clpX"/>
    <property type="match status" value="1"/>
</dbReference>
<dbReference type="NCBIfam" id="NF003745">
    <property type="entry name" value="PRK05342.1"/>
    <property type="match status" value="1"/>
</dbReference>
<dbReference type="PANTHER" id="PTHR48102:SF7">
    <property type="entry name" value="ATP-DEPENDENT CLP PROTEASE ATP-BINDING SUBUNIT CLPX-LIKE, MITOCHONDRIAL"/>
    <property type="match status" value="1"/>
</dbReference>
<dbReference type="PANTHER" id="PTHR48102">
    <property type="entry name" value="ATP-DEPENDENT CLP PROTEASE ATP-BINDING SUBUNIT CLPX-LIKE, MITOCHONDRIAL-RELATED"/>
    <property type="match status" value="1"/>
</dbReference>
<dbReference type="Pfam" id="PF07724">
    <property type="entry name" value="AAA_2"/>
    <property type="match status" value="1"/>
</dbReference>
<dbReference type="Pfam" id="PF10431">
    <property type="entry name" value="ClpB_D2-small"/>
    <property type="match status" value="1"/>
</dbReference>
<dbReference type="Pfam" id="PF06689">
    <property type="entry name" value="zf-C4_ClpX"/>
    <property type="match status" value="1"/>
</dbReference>
<dbReference type="SMART" id="SM00382">
    <property type="entry name" value="AAA"/>
    <property type="match status" value="1"/>
</dbReference>
<dbReference type="SMART" id="SM01086">
    <property type="entry name" value="ClpB_D2-small"/>
    <property type="match status" value="1"/>
</dbReference>
<dbReference type="SMART" id="SM00994">
    <property type="entry name" value="zf-C4_ClpX"/>
    <property type="match status" value="1"/>
</dbReference>
<dbReference type="SUPFAM" id="SSF57716">
    <property type="entry name" value="Glucocorticoid receptor-like (DNA-binding domain)"/>
    <property type="match status" value="1"/>
</dbReference>
<dbReference type="SUPFAM" id="SSF52540">
    <property type="entry name" value="P-loop containing nucleoside triphosphate hydrolases"/>
    <property type="match status" value="1"/>
</dbReference>
<dbReference type="PROSITE" id="PS51902">
    <property type="entry name" value="CLPX_ZB"/>
    <property type="match status" value="1"/>
</dbReference>
<reference key="1">
    <citation type="journal article" date="1989" name="J. Bacteriol.">
        <title>Physical and genetic map of the major nif gene cluster from Azotobacter vinelandii.</title>
        <authorList>
            <person name="Jacobson M.R."/>
            <person name="Brigle K.E."/>
            <person name="Bennett L.T."/>
            <person name="Setterquist R.A."/>
            <person name="Wilson M.S."/>
            <person name="Cash V.L."/>
            <person name="Beynon J."/>
            <person name="Newton W.E."/>
            <person name="Dean D.R."/>
        </authorList>
    </citation>
    <scope>NUCLEOTIDE SEQUENCE [GENOMIC DNA]</scope>
    <source>
        <strain>ATCC 13705 / OP1 / DSM 366 / NCIMB 11614 / LMG 3878 / UW</strain>
    </source>
</reference>
<reference key="2">
    <citation type="journal article" date="1993" name="J. Biol. Chem.">
        <title>ClpX, an alternative subunit for the ATP-dependent Clp protease of Escherichia coli. Sequence and in vivo activities.</title>
        <authorList>
            <person name="Gottesman S."/>
            <person name="Clark W.P."/>
            <person name="de Crecy-Lagard V."/>
            <person name="Maurizi M.R."/>
        </authorList>
    </citation>
    <scope>SIMILARITY TO CLPX</scope>
</reference>
<comment type="function">
    <text evidence="1">ATP-dependent specificity component of the Clp protease. It directs the protease to specific substrates. Can perform chaperone functions in the absence of ClpP.</text>
</comment>
<comment type="subunit">
    <text evidence="1">Component of the ClpX-ClpP complex. Forms a hexameric ring that, in the presence of ATP, binds to fourteen ClpP subunits assembled into a disk-like structure with a central cavity, resembling the structure of eukaryotic proteasomes.</text>
</comment>
<comment type="similarity">
    <text evidence="1">Belongs to the ClpX chaperone family.</text>
</comment>
<comment type="sequence caution" evidence="4">
    <conflict type="erroneous initiation">
        <sequence resource="EMBL-CDS" id="AAA64734"/>
    </conflict>
    <text>Truncated N-terminus.</text>
</comment>
<accession>P33683</accession>